<comment type="subcellular location">
    <subcellularLocation>
        <location evidence="2">Cell membrane</location>
        <topology evidence="2">Multi-pass membrane protein</topology>
    </subcellularLocation>
</comment>
<feature type="chain" id="PRO_0000106915" description="Uncharacterized protein MJ0526">
    <location>
        <begin position="1"/>
        <end position="92"/>
    </location>
</feature>
<feature type="transmembrane region" description="Helical" evidence="1">
    <location>
        <begin position="1"/>
        <end position="21"/>
    </location>
</feature>
<feature type="transmembrane region" description="Helical" evidence="1">
    <location>
        <begin position="29"/>
        <end position="49"/>
    </location>
</feature>
<feature type="transmembrane region" description="Helical" evidence="1">
    <location>
        <begin position="51"/>
        <end position="71"/>
    </location>
</feature>
<proteinExistence type="predicted"/>
<evidence type="ECO:0000255" key="1"/>
<evidence type="ECO:0000305" key="2"/>
<gene>
    <name type="ordered locus">MJ0526</name>
</gene>
<sequence>MEVLPLVSGICCILGGIGVILHTNPINKIIMLALLEIGMIGLIVSCYYLDIAIVSSLCEPICTVILLLGYLKYLTTVKKKKRYGRNLPILSK</sequence>
<accession>Q57946</accession>
<name>Y526_METJA</name>
<dbReference type="EMBL" id="L77117">
    <property type="protein sequence ID" value="AAB98529.1"/>
    <property type="molecule type" value="Genomic_DNA"/>
</dbReference>
<dbReference type="PIR" id="F64365">
    <property type="entry name" value="F64365"/>
</dbReference>
<dbReference type="RefSeq" id="WP_010870029.1">
    <property type="nucleotide sequence ID" value="NC_000909.1"/>
</dbReference>
<dbReference type="SMR" id="Q57946"/>
<dbReference type="STRING" id="243232.MJ_0526"/>
<dbReference type="PaxDb" id="243232-MJ_0526"/>
<dbReference type="EnsemblBacteria" id="AAB98529">
    <property type="protein sequence ID" value="AAB98529"/>
    <property type="gene ID" value="MJ_0526"/>
</dbReference>
<dbReference type="GeneID" id="1451390"/>
<dbReference type="KEGG" id="mja:MJ_0526"/>
<dbReference type="eggNOG" id="arCOG04829">
    <property type="taxonomic scope" value="Archaea"/>
</dbReference>
<dbReference type="HOGENOM" id="CLU_170806_0_0_2"/>
<dbReference type="InParanoid" id="Q57946"/>
<dbReference type="OrthoDB" id="65862at2157"/>
<dbReference type="Proteomes" id="UP000000805">
    <property type="component" value="Chromosome"/>
</dbReference>
<dbReference type="GO" id="GO:0005886">
    <property type="term" value="C:plasma membrane"/>
    <property type="evidence" value="ECO:0007669"/>
    <property type="project" value="UniProtKB-SubCell"/>
</dbReference>
<dbReference type="InterPro" id="IPR019213">
    <property type="entry name" value="DUF2108_membrane"/>
</dbReference>
<dbReference type="InterPro" id="IPR011308">
    <property type="entry name" value="Prd_NiFe_hyd_3_EhaD"/>
</dbReference>
<dbReference type="Pfam" id="PF09881">
    <property type="entry name" value="DUF2108"/>
    <property type="match status" value="1"/>
</dbReference>
<dbReference type="PIRSF" id="PIRSF006581">
    <property type="entry name" value="EhaD"/>
    <property type="match status" value="1"/>
</dbReference>
<keyword id="KW-1003">Cell membrane</keyword>
<keyword id="KW-0472">Membrane</keyword>
<keyword id="KW-1185">Reference proteome</keyword>
<keyword id="KW-0812">Transmembrane</keyword>
<keyword id="KW-1133">Transmembrane helix</keyword>
<reference key="1">
    <citation type="journal article" date="1996" name="Science">
        <title>Complete genome sequence of the methanogenic archaeon, Methanococcus jannaschii.</title>
        <authorList>
            <person name="Bult C.J."/>
            <person name="White O."/>
            <person name="Olsen G.J."/>
            <person name="Zhou L."/>
            <person name="Fleischmann R.D."/>
            <person name="Sutton G.G."/>
            <person name="Blake J.A."/>
            <person name="FitzGerald L.M."/>
            <person name="Clayton R.A."/>
            <person name="Gocayne J.D."/>
            <person name="Kerlavage A.R."/>
            <person name="Dougherty B.A."/>
            <person name="Tomb J.-F."/>
            <person name="Adams M.D."/>
            <person name="Reich C.I."/>
            <person name="Overbeek R."/>
            <person name="Kirkness E.F."/>
            <person name="Weinstock K.G."/>
            <person name="Merrick J.M."/>
            <person name="Glodek A."/>
            <person name="Scott J.L."/>
            <person name="Geoghagen N.S.M."/>
            <person name="Weidman J.F."/>
            <person name="Fuhrmann J.L."/>
            <person name="Nguyen D."/>
            <person name="Utterback T.R."/>
            <person name="Kelley J.M."/>
            <person name="Peterson J.D."/>
            <person name="Sadow P.W."/>
            <person name="Hanna M.C."/>
            <person name="Cotton M.D."/>
            <person name="Roberts K.M."/>
            <person name="Hurst M.A."/>
            <person name="Kaine B.P."/>
            <person name="Borodovsky M."/>
            <person name="Klenk H.-P."/>
            <person name="Fraser C.M."/>
            <person name="Smith H.O."/>
            <person name="Woese C.R."/>
            <person name="Venter J.C."/>
        </authorList>
    </citation>
    <scope>NUCLEOTIDE SEQUENCE [LARGE SCALE GENOMIC DNA]</scope>
    <source>
        <strain>ATCC 43067 / DSM 2661 / JAL-1 / JCM 10045 / NBRC 100440</strain>
    </source>
</reference>
<protein>
    <recommendedName>
        <fullName>Uncharacterized protein MJ0526</fullName>
    </recommendedName>
</protein>
<organism>
    <name type="scientific">Methanocaldococcus jannaschii (strain ATCC 43067 / DSM 2661 / JAL-1 / JCM 10045 / NBRC 100440)</name>
    <name type="common">Methanococcus jannaschii</name>
    <dbReference type="NCBI Taxonomy" id="243232"/>
    <lineage>
        <taxon>Archaea</taxon>
        <taxon>Methanobacteriati</taxon>
        <taxon>Methanobacteriota</taxon>
        <taxon>Methanomada group</taxon>
        <taxon>Methanococci</taxon>
        <taxon>Methanococcales</taxon>
        <taxon>Methanocaldococcaceae</taxon>
        <taxon>Methanocaldococcus</taxon>
    </lineage>
</organism>